<organism>
    <name type="scientific">Pongo abelii</name>
    <name type="common">Sumatran orangutan</name>
    <name type="synonym">Pongo pygmaeus abelii</name>
    <dbReference type="NCBI Taxonomy" id="9601"/>
    <lineage>
        <taxon>Eukaryota</taxon>
        <taxon>Metazoa</taxon>
        <taxon>Chordata</taxon>
        <taxon>Craniata</taxon>
        <taxon>Vertebrata</taxon>
        <taxon>Euteleostomi</taxon>
        <taxon>Mammalia</taxon>
        <taxon>Eutheria</taxon>
        <taxon>Euarchontoglires</taxon>
        <taxon>Primates</taxon>
        <taxon>Haplorrhini</taxon>
        <taxon>Catarrhini</taxon>
        <taxon>Hominidae</taxon>
        <taxon>Pongo</taxon>
    </lineage>
</organism>
<comment type="function">
    <text evidence="1">Probably functions as a 3'-phosphoadenylyl sulfate:adenosine 3',5'-bisphosphate antiporter at the Golgi membranes. Mediates the transport from the cytosol into the lumen of the Golgi of 3'-phosphoadenylyl sulfate/adenosine 3'-phospho 5'-phosphosulfate (PAPS), a universal sulfuryl donor for sulfation events that take place in that compartment.</text>
</comment>
<comment type="catalytic activity">
    <reaction evidence="1">
        <text>3'-phosphoadenylyl sulfate(in) + adenosine 3',5'-bisphosphate(out) = 3'-phosphoadenylyl sulfate(out) + adenosine 3',5'-bisphosphate(in)</text>
        <dbReference type="Rhea" id="RHEA:76063"/>
        <dbReference type="ChEBI" id="CHEBI:58339"/>
        <dbReference type="ChEBI" id="CHEBI:58343"/>
    </reaction>
</comment>
<comment type="subcellular location">
    <subcellularLocation>
        <location evidence="1">Golgi apparatus membrane</location>
        <topology evidence="2">Multi-pass membrane protein</topology>
    </subcellularLocation>
</comment>
<comment type="similarity">
    <text evidence="3">Belongs to the nucleotide-sugar transporter family. SLC35B subfamily.</text>
</comment>
<accession>Q5R831</accession>
<feature type="chain" id="PRO_0000213381" description="Adenosine 3'-phospho 5'-phosphosulfate transporter 2">
    <location>
        <begin position="1"/>
        <end position="401"/>
    </location>
</feature>
<feature type="transmembrane region" description="Helical" evidence="2">
    <location>
        <begin position="78"/>
        <end position="98"/>
    </location>
</feature>
<feature type="transmembrane region" description="Helical" evidence="2">
    <location>
        <begin position="111"/>
        <end position="131"/>
    </location>
</feature>
<feature type="transmembrane region" description="Helical" evidence="2">
    <location>
        <begin position="147"/>
        <end position="167"/>
    </location>
</feature>
<feature type="transmembrane region" description="Helical" evidence="2">
    <location>
        <begin position="170"/>
        <end position="190"/>
    </location>
</feature>
<feature type="transmembrane region" description="Helical" evidence="2">
    <location>
        <begin position="200"/>
        <end position="220"/>
    </location>
</feature>
<feature type="transmembrane region" description="Helical" evidence="2">
    <location>
        <begin position="223"/>
        <end position="243"/>
    </location>
</feature>
<feature type="transmembrane region" description="Helical" evidence="2">
    <location>
        <begin position="267"/>
        <end position="287"/>
    </location>
</feature>
<feature type="transmembrane region" description="Helical" evidence="2">
    <location>
        <begin position="298"/>
        <end position="317"/>
    </location>
</feature>
<feature type="transmembrane region" description="Helical" evidence="2">
    <location>
        <begin position="324"/>
        <end position="346"/>
    </location>
</feature>
<feature type="transmembrane region" description="Helical" evidence="2">
    <location>
        <begin position="349"/>
        <end position="369"/>
    </location>
</feature>
<feature type="glycosylation site" description="N-linked (GlcNAc...) asparagine" evidence="2">
    <location>
        <position position="12"/>
    </location>
</feature>
<feature type="glycosylation site" description="N-linked (GlcNAc...) asparagine" evidence="2">
    <location>
        <position position="71"/>
    </location>
</feature>
<feature type="glycosylation site" description="N-linked (GlcNAc...) asparagine" evidence="2">
    <location>
        <position position="254"/>
    </location>
</feature>
<protein>
    <recommendedName>
        <fullName evidence="3">Adenosine 3'-phospho 5'-phosphosulfate transporter 2</fullName>
    </recommendedName>
    <alternativeName>
        <fullName evidence="1">Solute carrier family 35 member B3</fullName>
    </alternativeName>
</protein>
<reference key="1">
    <citation type="submission" date="2004-11" db="EMBL/GenBank/DDBJ databases">
        <authorList>
            <consortium name="The German cDNA consortium"/>
        </authorList>
    </citation>
    <scope>NUCLEOTIDE SEQUENCE [LARGE SCALE MRNA]</scope>
    <source>
        <tissue>Kidney</tissue>
    </source>
</reference>
<proteinExistence type="evidence at transcript level"/>
<dbReference type="EMBL" id="CR859924">
    <property type="protein sequence ID" value="CAH92079.1"/>
    <property type="molecule type" value="mRNA"/>
</dbReference>
<dbReference type="RefSeq" id="NP_001126212.1">
    <property type="nucleotide sequence ID" value="NM_001132740.2"/>
</dbReference>
<dbReference type="SMR" id="Q5R831"/>
<dbReference type="FunCoup" id="Q5R831">
    <property type="interactions" value="707"/>
</dbReference>
<dbReference type="STRING" id="9601.ENSPPYP00000018139"/>
<dbReference type="GlyCosmos" id="Q5R831">
    <property type="glycosylation" value="3 sites, No reported glycans"/>
</dbReference>
<dbReference type="GeneID" id="100173180"/>
<dbReference type="KEGG" id="pon:100173180"/>
<dbReference type="CTD" id="51000"/>
<dbReference type="eggNOG" id="KOG1582">
    <property type="taxonomic scope" value="Eukaryota"/>
</dbReference>
<dbReference type="InParanoid" id="Q5R831"/>
<dbReference type="OrthoDB" id="438495at2759"/>
<dbReference type="Proteomes" id="UP000001595">
    <property type="component" value="Unplaced"/>
</dbReference>
<dbReference type="GO" id="GO:0005789">
    <property type="term" value="C:endoplasmic reticulum membrane"/>
    <property type="evidence" value="ECO:0007669"/>
    <property type="project" value="TreeGrafter"/>
</dbReference>
<dbReference type="GO" id="GO:0000139">
    <property type="term" value="C:Golgi membrane"/>
    <property type="evidence" value="ECO:0000250"/>
    <property type="project" value="UniProtKB"/>
</dbReference>
<dbReference type="GO" id="GO:0046964">
    <property type="term" value="F:3'-phosphoadenosine 5'-phosphosulfate transmembrane transporter activity"/>
    <property type="evidence" value="ECO:0000250"/>
    <property type="project" value="UniProtKB"/>
</dbReference>
<dbReference type="GO" id="GO:0015297">
    <property type="term" value="F:antiporter activity"/>
    <property type="evidence" value="ECO:0007669"/>
    <property type="project" value="UniProtKB-KW"/>
</dbReference>
<dbReference type="InterPro" id="IPR013657">
    <property type="entry name" value="SCL35B1-4/HUT1"/>
</dbReference>
<dbReference type="PANTHER" id="PTHR10778:SF8">
    <property type="entry name" value="ADENOSINE 3'-PHOSPHO 5'-PHOSPHOSULFATE TRANSPORTER 2"/>
    <property type="match status" value="1"/>
</dbReference>
<dbReference type="PANTHER" id="PTHR10778">
    <property type="entry name" value="SOLUTE CARRIER FAMILY 35 MEMBER B"/>
    <property type="match status" value="1"/>
</dbReference>
<dbReference type="Pfam" id="PF08449">
    <property type="entry name" value="UAA"/>
    <property type="match status" value="1"/>
</dbReference>
<evidence type="ECO:0000250" key="1">
    <source>
        <dbReference type="UniProtKB" id="Q9H1N7"/>
    </source>
</evidence>
<evidence type="ECO:0000255" key="2"/>
<evidence type="ECO:0000305" key="3"/>
<gene>
    <name evidence="1" type="primary">SLC35B3</name>
</gene>
<keyword id="KW-0050">Antiport</keyword>
<keyword id="KW-0325">Glycoprotein</keyword>
<keyword id="KW-0333">Golgi apparatus</keyword>
<keyword id="KW-0472">Membrane</keyword>
<keyword id="KW-1185">Reference proteome</keyword>
<keyword id="KW-0812">Transmembrane</keyword>
<keyword id="KW-1133">Transmembrane helix</keyword>
<keyword id="KW-0813">Transport</keyword>
<sequence length="401" mass="44712">MDLTQQAKDIQNVTVEETNKNNSESIECSKITMDLKFNNSRKYISITVPSKTQTMSPHIKSIDDIVVLGMNLSKFNKLTQFFICVAGVFVFYLIYGYLQELIFSVEGFKSYGWYLTLVQFAFYSIFGLIELQPIQDKRRRIPGKTYMIIAFLTVGTMGLSNTSLGYLNYPTQVIFKCCKLIPVMLGGVFIQGKRYNVADVSAAICMSLGLIWFTLADSTIAPNFNLTGVVLISLALCADAVIGNVQEKAMKLHNASNSEMVLYSYSIGFVYILLGLTCTSGLGPAVTFCAKNPVRTYGYAFLFSLTGYFGISFVLALIKIFGALIAVTVTTGRKAMTIVLSFIFFAKPFTFQYVWSGLLVFLGIFLNVYSKNMDKIRLPSLYDLINKSVEARKSRTLAQTV</sequence>
<name>S35B3_PONAB</name>